<organism>
    <name type="scientific">Xenopus laevis</name>
    <name type="common">African clawed frog</name>
    <dbReference type="NCBI Taxonomy" id="8355"/>
    <lineage>
        <taxon>Eukaryota</taxon>
        <taxon>Metazoa</taxon>
        <taxon>Chordata</taxon>
        <taxon>Craniata</taxon>
        <taxon>Vertebrata</taxon>
        <taxon>Euteleostomi</taxon>
        <taxon>Amphibia</taxon>
        <taxon>Batrachia</taxon>
        <taxon>Anura</taxon>
        <taxon>Pipoidea</taxon>
        <taxon>Pipidae</taxon>
        <taxon>Xenopodinae</taxon>
        <taxon>Xenopus</taxon>
        <taxon>Xenopus</taxon>
    </lineage>
</organism>
<reference key="1">
    <citation type="journal article" date="1995" name="RNA">
        <title>Poly(A) polymerases in the nucleus and cytoplasm of frog oocytes: dynamic changes during oocyte maturation and early development.</title>
        <authorList>
            <person name="Ballantyne S."/>
            <person name="Bilger A."/>
            <person name="Astrom J."/>
            <person name="Virtanen A."/>
            <person name="Wickens M."/>
        </authorList>
    </citation>
    <scope>NUCLEOTIDE SEQUENCE [MRNA]</scope>
    <source>
        <tissue>Ovary</tissue>
    </source>
</reference>
<evidence type="ECO:0000250" key="1"/>
<evidence type="ECO:0000256" key="2">
    <source>
        <dbReference type="SAM" id="MobiDB-lite"/>
    </source>
</evidence>
<evidence type="ECO:0000305" key="3"/>
<keyword id="KW-0067">ATP-binding</keyword>
<keyword id="KW-0460">Magnesium</keyword>
<keyword id="KW-0464">Manganese</keyword>
<keyword id="KW-0479">Metal-binding</keyword>
<keyword id="KW-0507">mRNA processing</keyword>
<keyword id="KW-0547">Nucleotide-binding</keyword>
<keyword id="KW-0539">Nucleus</keyword>
<keyword id="KW-1185">Reference proteome</keyword>
<keyword id="KW-0694">RNA-binding</keyword>
<keyword id="KW-0808">Transferase</keyword>
<protein>
    <recommendedName>
        <fullName>Poly(A) polymerase alpha-A</fullName>
        <shortName>PAP-alpha-A</shortName>
        <ecNumber>2.7.7.19</ecNumber>
    </recommendedName>
    <alternativeName>
        <fullName>Polynucleotide adenylyltransferase alpha-A</fullName>
    </alternativeName>
</protein>
<proteinExistence type="evidence at transcript level"/>
<sequence length="715" mass="80188">PKTFGITSPISLAAAKDTDCTLMQKLIETLKPYGVFEEEEQLQHRILGKLNNLVKEWIREISELKHLPQSVIENVGGKIFTFGPYRLGVHTKGADIDALCVAPRHVDRSDFFSSFYDKLKQQEEVKDLRSVEEAFVPVIKLCFDGIEIDILFARLALQTIPEDLDLRDDSLLKNLDIRCIRSLNGCRVTDEILHLVPNIDSFRLTLRAIKLWAKRHNIYSNILGFLGGVSWAMLVARTCQLYPNAIASTLVHKFFLVFSKWEWPNPVLLKQPEECNLNLPVWDPRVNPSDRYHLMPIITPAYPQQNSTYNVSVSTRAVMIEEFKQGLAITDEILLGKAEWSKLFDAPNFFQKYKHYILLLASAPTEKQRLEWVGLVESKIRILVGSLEKNEFITLAHVNPRSFPAPSENMEKEEFRTMWVIGLVFKKMENSENLSVDLTYDIQSFTDTVDRQAINSKMFETEMKIAAMHVKRKQLHQLQPSHVSPKKKKHSFEGVKLLSLNDSSIDLSVDSDNSMSVPSPTNATRTSPLNSSGLSQGNSPAAPVSFSVTNVQATDVMVPQNNSTENLGGSLNESIPESATHPGFSSTPKPLVTRVVSSMRLVNQLQKPVSNTITKMPSPVAGVKRTSSPSNEDSPKKNKTEEDENDSSISADVDDQNKLETEELKEVHSEEKSSSPVPGSLPFSQQSSTDLSDISVVPATPIPVIKNSIKLRLNR</sequence>
<comment type="function">
    <text>Polymerase that creates the 3'-poly(A) tail of mRNA's. May acquire specificity through interaction with a cleavage and polyadenylation factor (CPSF).</text>
</comment>
<comment type="catalytic activity">
    <reaction>
        <text>RNA(n) + ATP = RNA(n)-3'-adenine ribonucleotide + diphosphate</text>
        <dbReference type="Rhea" id="RHEA:11332"/>
        <dbReference type="Rhea" id="RHEA-COMP:14527"/>
        <dbReference type="Rhea" id="RHEA-COMP:17347"/>
        <dbReference type="ChEBI" id="CHEBI:30616"/>
        <dbReference type="ChEBI" id="CHEBI:33019"/>
        <dbReference type="ChEBI" id="CHEBI:140395"/>
        <dbReference type="ChEBI" id="CHEBI:173115"/>
        <dbReference type="EC" id="2.7.7.19"/>
    </reaction>
</comment>
<comment type="cofactor">
    <cofactor evidence="1">
        <name>Mg(2+)</name>
        <dbReference type="ChEBI" id="CHEBI:18420"/>
    </cofactor>
    <cofactor evidence="1">
        <name>Mn(2+)</name>
        <dbReference type="ChEBI" id="CHEBI:29035"/>
    </cofactor>
    <text evidence="1">Binds 2 magnesium ions. Also active with manganese.</text>
</comment>
<comment type="subunit">
    <text evidence="1">Monomer.</text>
</comment>
<comment type="subcellular location">
    <subcellularLocation>
        <location>Nucleus</location>
    </subcellularLocation>
</comment>
<comment type="similarity">
    <text evidence="3">Belongs to the poly(A) polymerase family.</text>
</comment>
<gene>
    <name type="primary">papola-a</name>
</gene>
<dbReference type="EC" id="2.7.7.19"/>
<dbReference type="EMBL" id="U19973">
    <property type="protein sequence ID" value="AAC59745.1"/>
    <property type="molecule type" value="mRNA"/>
</dbReference>
<dbReference type="SMR" id="P51004"/>
<dbReference type="AGR" id="Xenbase:XB-GENE-17332401"/>
<dbReference type="Xenbase" id="XB-GENE-17332401">
    <property type="gene designation" value="papola.S"/>
</dbReference>
<dbReference type="Proteomes" id="UP000186698">
    <property type="component" value="Unplaced"/>
</dbReference>
<dbReference type="GO" id="GO:0005634">
    <property type="term" value="C:nucleus"/>
    <property type="evidence" value="ECO:0000318"/>
    <property type="project" value="GO_Central"/>
</dbReference>
<dbReference type="GO" id="GO:0005524">
    <property type="term" value="F:ATP binding"/>
    <property type="evidence" value="ECO:0007669"/>
    <property type="project" value="UniProtKB-KW"/>
</dbReference>
<dbReference type="GO" id="GO:0046872">
    <property type="term" value="F:metal ion binding"/>
    <property type="evidence" value="ECO:0007669"/>
    <property type="project" value="UniProtKB-KW"/>
</dbReference>
<dbReference type="GO" id="GO:1990817">
    <property type="term" value="F:poly(A) RNA polymerase activity"/>
    <property type="evidence" value="ECO:0000318"/>
    <property type="project" value="GO_Central"/>
</dbReference>
<dbReference type="GO" id="GO:0003723">
    <property type="term" value="F:RNA binding"/>
    <property type="evidence" value="ECO:0007669"/>
    <property type="project" value="UniProtKB-KW"/>
</dbReference>
<dbReference type="GO" id="GO:0006397">
    <property type="term" value="P:mRNA processing"/>
    <property type="evidence" value="ECO:0007669"/>
    <property type="project" value="UniProtKB-KW"/>
</dbReference>
<dbReference type="GO" id="GO:0031123">
    <property type="term" value="P:RNA 3'-end processing"/>
    <property type="evidence" value="ECO:0007669"/>
    <property type="project" value="InterPro"/>
</dbReference>
<dbReference type="CDD" id="cd05402">
    <property type="entry name" value="NT_PAP_TUTase"/>
    <property type="match status" value="1"/>
</dbReference>
<dbReference type="FunFam" id="3.30.460.10:FF:000002">
    <property type="entry name" value="Poly(A) polymerase alpha, putative"/>
    <property type="match status" value="1"/>
</dbReference>
<dbReference type="FunFam" id="1.10.1410.10:FF:000001">
    <property type="entry name" value="Putative poly(A) polymerase gamma"/>
    <property type="match status" value="1"/>
</dbReference>
<dbReference type="FunFam" id="3.30.70.590:FF:000001">
    <property type="entry name" value="Putative poly(A) polymerase gamma"/>
    <property type="match status" value="1"/>
</dbReference>
<dbReference type="Gene3D" id="1.10.1410.10">
    <property type="match status" value="1"/>
</dbReference>
<dbReference type="Gene3D" id="3.30.460.10">
    <property type="entry name" value="Beta Polymerase, domain 2"/>
    <property type="match status" value="1"/>
</dbReference>
<dbReference type="Gene3D" id="3.30.70.590">
    <property type="entry name" value="Poly(A) polymerase predicted RNA binding domain"/>
    <property type="match status" value="1"/>
</dbReference>
<dbReference type="InterPro" id="IPR043519">
    <property type="entry name" value="NT_sf"/>
</dbReference>
<dbReference type="InterPro" id="IPR011068">
    <property type="entry name" value="NuclTrfase_I-like_C"/>
</dbReference>
<dbReference type="InterPro" id="IPR007012">
    <property type="entry name" value="PolA_pol_cen_dom"/>
</dbReference>
<dbReference type="InterPro" id="IPR048840">
    <property type="entry name" value="PolA_pol_NTPase"/>
</dbReference>
<dbReference type="InterPro" id="IPR007010">
    <property type="entry name" value="PolA_pol_RNA-bd_dom"/>
</dbReference>
<dbReference type="InterPro" id="IPR014492">
    <property type="entry name" value="PolyA_polymerase"/>
</dbReference>
<dbReference type="PANTHER" id="PTHR10682">
    <property type="entry name" value="POLY A POLYMERASE"/>
    <property type="match status" value="1"/>
</dbReference>
<dbReference type="PANTHER" id="PTHR10682:SF9">
    <property type="entry name" value="POLY(A) POLYMERASE ALPHA"/>
    <property type="match status" value="1"/>
</dbReference>
<dbReference type="Pfam" id="PF04928">
    <property type="entry name" value="PAP_central"/>
    <property type="match status" value="1"/>
</dbReference>
<dbReference type="Pfam" id="PF20750">
    <property type="entry name" value="PAP_NTPase"/>
    <property type="match status" value="1"/>
</dbReference>
<dbReference type="Pfam" id="PF04926">
    <property type="entry name" value="PAP_RNA-bind"/>
    <property type="match status" value="2"/>
</dbReference>
<dbReference type="PIRSF" id="PIRSF018425">
    <property type="entry name" value="PolyA_polymerase"/>
    <property type="match status" value="1"/>
</dbReference>
<dbReference type="SUPFAM" id="SSF81301">
    <property type="entry name" value="Nucleotidyltransferase"/>
    <property type="match status" value="1"/>
</dbReference>
<dbReference type="SUPFAM" id="SSF55003">
    <property type="entry name" value="PAP/Archaeal CCA-adding enzyme, C-terminal domain"/>
    <property type="match status" value="1"/>
</dbReference>
<dbReference type="SUPFAM" id="SSF81631">
    <property type="entry name" value="PAP/OAS1 substrate-binding domain"/>
    <property type="match status" value="1"/>
</dbReference>
<feature type="chain" id="PRO_0000051614" description="Poly(A) polymerase alpha-A">
    <location>
        <begin position="1" status="less than"/>
        <end position="715"/>
    </location>
</feature>
<feature type="region of interest" description="Disordered" evidence="2">
    <location>
        <begin position="510"/>
        <end position="543"/>
    </location>
</feature>
<feature type="region of interest" description="Disordered" evidence="2">
    <location>
        <begin position="560"/>
        <end position="590"/>
    </location>
</feature>
<feature type="region of interest" description="Disordered" evidence="2">
    <location>
        <begin position="607"/>
        <end position="693"/>
    </location>
</feature>
<feature type="short sequence motif" description="Nuclear localization signal 1" evidence="1">
    <location>
        <begin position="472"/>
        <end position="489"/>
    </location>
</feature>
<feature type="short sequence motif" description="Nuclear localization signal 2" evidence="1">
    <location>
        <begin position="624"/>
        <end position="639"/>
    </location>
</feature>
<feature type="compositionally biased region" description="Polar residues" evidence="2">
    <location>
        <begin position="515"/>
        <end position="539"/>
    </location>
</feature>
<feature type="compositionally biased region" description="Polar residues" evidence="2">
    <location>
        <begin position="560"/>
        <end position="588"/>
    </location>
</feature>
<feature type="compositionally biased region" description="Basic and acidic residues" evidence="2">
    <location>
        <begin position="655"/>
        <end position="673"/>
    </location>
</feature>
<feature type="compositionally biased region" description="Polar residues" evidence="2">
    <location>
        <begin position="674"/>
        <end position="692"/>
    </location>
</feature>
<feature type="binding site" evidence="1">
    <location>
        <begin position="82"/>
        <end position="84"/>
    </location>
    <ligand>
        <name>ATP</name>
        <dbReference type="ChEBI" id="CHEBI:30616"/>
    </ligand>
</feature>
<feature type="binding site" evidence="1">
    <location>
        <position position="91"/>
    </location>
    <ligand>
        <name>ATP</name>
        <dbReference type="ChEBI" id="CHEBI:30616"/>
    </ligand>
</feature>
<feature type="binding site" evidence="1">
    <location>
        <begin position="95"/>
        <end position="97"/>
    </location>
    <ligand>
        <name>ATP</name>
        <dbReference type="ChEBI" id="CHEBI:30616"/>
    </ligand>
</feature>
<feature type="binding site" evidence="1">
    <location>
        <position position="95"/>
    </location>
    <ligand>
        <name>Mg(2+)</name>
        <dbReference type="ChEBI" id="CHEBI:18420"/>
        <label>1</label>
        <note>catalytic</note>
    </ligand>
</feature>
<feature type="binding site" evidence="1">
    <location>
        <position position="95"/>
    </location>
    <ligand>
        <name>Mg(2+)</name>
        <dbReference type="ChEBI" id="CHEBI:18420"/>
        <label>2</label>
        <note>catalytic</note>
    </ligand>
</feature>
<feature type="binding site" evidence="1">
    <location>
        <position position="97"/>
    </location>
    <ligand>
        <name>Mg(2+)</name>
        <dbReference type="ChEBI" id="CHEBI:18420"/>
        <label>1</label>
        <note>catalytic</note>
    </ligand>
</feature>
<feature type="binding site" evidence="1">
    <location>
        <position position="97"/>
    </location>
    <ligand>
        <name>Mg(2+)</name>
        <dbReference type="ChEBI" id="CHEBI:18420"/>
        <label>2</label>
        <note>catalytic</note>
    </ligand>
</feature>
<feature type="binding site" evidence="1">
    <location>
        <position position="149"/>
    </location>
    <ligand>
        <name>ATP</name>
        <dbReference type="ChEBI" id="CHEBI:30616"/>
    </ligand>
</feature>
<feature type="binding site" evidence="1">
    <location>
        <position position="149"/>
    </location>
    <ligand>
        <name>Mg(2+)</name>
        <dbReference type="ChEBI" id="CHEBI:18420"/>
        <label>2</label>
        <note>catalytic</note>
    </ligand>
</feature>
<feature type="binding site" evidence="1">
    <location>
        <position position="210"/>
    </location>
    <ligand>
        <name>ATP</name>
        <dbReference type="ChEBI" id="CHEBI:30616"/>
    </ligand>
</feature>
<feature type="binding site" evidence="1">
    <location>
        <position position="219"/>
    </location>
    <ligand>
        <name>ATP</name>
        <dbReference type="ChEBI" id="CHEBI:30616"/>
    </ligand>
</feature>
<feature type="binding site" evidence="1">
    <location>
        <begin position="228"/>
        <end position="229"/>
    </location>
    <ligand>
        <name>ATP</name>
        <dbReference type="ChEBI" id="CHEBI:30616"/>
    </ligand>
</feature>
<feature type="site" description="Interaction with RNA" evidence="1">
    <location>
        <position position="135"/>
    </location>
</feature>
<feature type="site" description="Interaction with RNA" evidence="1">
    <location>
        <position position="140"/>
    </location>
</feature>
<feature type="site" description="Interaction with RNA" evidence="1">
    <location>
        <position position="310"/>
    </location>
</feature>
<feature type="site" description="Interaction with RNA" evidence="1">
    <location>
        <position position="381"/>
    </location>
</feature>
<feature type="site" description="Interaction with RNA" evidence="1">
    <location>
        <position position="506"/>
    </location>
</feature>
<feature type="non-terminal residue">
    <location>
        <position position="1"/>
    </location>
</feature>
<name>PAPO1_XENLA</name>
<accession>P51004</accession>